<organism>
    <name type="scientific">Clostridium novyi (strain NT)</name>
    <dbReference type="NCBI Taxonomy" id="386415"/>
    <lineage>
        <taxon>Bacteria</taxon>
        <taxon>Bacillati</taxon>
        <taxon>Bacillota</taxon>
        <taxon>Clostridia</taxon>
        <taxon>Eubacteriales</taxon>
        <taxon>Clostridiaceae</taxon>
        <taxon>Clostridium</taxon>
    </lineage>
</organism>
<protein>
    <recommendedName>
        <fullName evidence="1">Histidinol-phosphate aminotransferase</fullName>
        <ecNumber evidence="1">2.6.1.9</ecNumber>
    </recommendedName>
    <alternativeName>
        <fullName evidence="1">Imidazole acetol-phosphate transaminase</fullName>
    </alternativeName>
</protein>
<feature type="chain" id="PRO_0000319752" description="Histidinol-phosphate aminotransferase">
    <location>
        <begin position="1"/>
        <end position="356"/>
    </location>
</feature>
<feature type="modified residue" description="N6-(pyridoxal phosphate)lysine" evidence="1">
    <location>
        <position position="213"/>
    </location>
</feature>
<comment type="catalytic activity">
    <reaction evidence="1">
        <text>L-histidinol phosphate + 2-oxoglutarate = 3-(imidazol-4-yl)-2-oxopropyl phosphate + L-glutamate</text>
        <dbReference type="Rhea" id="RHEA:23744"/>
        <dbReference type="ChEBI" id="CHEBI:16810"/>
        <dbReference type="ChEBI" id="CHEBI:29985"/>
        <dbReference type="ChEBI" id="CHEBI:57766"/>
        <dbReference type="ChEBI" id="CHEBI:57980"/>
        <dbReference type="EC" id="2.6.1.9"/>
    </reaction>
</comment>
<comment type="cofactor">
    <cofactor evidence="1">
        <name>pyridoxal 5'-phosphate</name>
        <dbReference type="ChEBI" id="CHEBI:597326"/>
    </cofactor>
</comment>
<comment type="pathway">
    <text evidence="1">Amino-acid biosynthesis; L-histidine biosynthesis; L-histidine from 5-phospho-alpha-D-ribose 1-diphosphate: step 7/9.</text>
</comment>
<comment type="subunit">
    <text evidence="1">Homodimer.</text>
</comment>
<comment type="similarity">
    <text evidence="1">Belongs to the class-II pyridoxal-phosphate-dependent aminotransferase family. Histidinol-phosphate aminotransferase subfamily.</text>
</comment>
<gene>
    <name evidence="1" type="primary">hisC</name>
    <name type="ordered locus">NT01CX_1063</name>
</gene>
<dbReference type="EC" id="2.6.1.9" evidence="1"/>
<dbReference type="EMBL" id="CP000382">
    <property type="protein sequence ID" value="ABK61580.1"/>
    <property type="molecule type" value="Genomic_DNA"/>
</dbReference>
<dbReference type="RefSeq" id="WP_011721167.1">
    <property type="nucleotide sequence ID" value="NC_008593.1"/>
</dbReference>
<dbReference type="SMR" id="A0PXP5"/>
<dbReference type="STRING" id="386415.NT01CX_1063"/>
<dbReference type="KEGG" id="cno:NT01CX_1063"/>
<dbReference type="eggNOG" id="COG0079">
    <property type="taxonomic scope" value="Bacteria"/>
</dbReference>
<dbReference type="HOGENOM" id="CLU_017584_3_1_9"/>
<dbReference type="UniPathway" id="UPA00031">
    <property type="reaction ID" value="UER00012"/>
</dbReference>
<dbReference type="Proteomes" id="UP000008220">
    <property type="component" value="Chromosome"/>
</dbReference>
<dbReference type="GO" id="GO:0004400">
    <property type="term" value="F:histidinol-phosphate transaminase activity"/>
    <property type="evidence" value="ECO:0007669"/>
    <property type="project" value="UniProtKB-UniRule"/>
</dbReference>
<dbReference type="GO" id="GO:0030170">
    <property type="term" value="F:pyridoxal phosphate binding"/>
    <property type="evidence" value="ECO:0007669"/>
    <property type="project" value="InterPro"/>
</dbReference>
<dbReference type="GO" id="GO:0000105">
    <property type="term" value="P:L-histidine biosynthetic process"/>
    <property type="evidence" value="ECO:0007669"/>
    <property type="project" value="UniProtKB-UniRule"/>
</dbReference>
<dbReference type="CDD" id="cd00609">
    <property type="entry name" value="AAT_like"/>
    <property type="match status" value="1"/>
</dbReference>
<dbReference type="Gene3D" id="3.90.1150.10">
    <property type="entry name" value="Aspartate Aminotransferase, domain 1"/>
    <property type="match status" value="1"/>
</dbReference>
<dbReference type="Gene3D" id="3.40.640.10">
    <property type="entry name" value="Type I PLP-dependent aspartate aminotransferase-like (Major domain)"/>
    <property type="match status" value="1"/>
</dbReference>
<dbReference type="HAMAP" id="MF_01023">
    <property type="entry name" value="HisC_aminotrans_2"/>
    <property type="match status" value="1"/>
</dbReference>
<dbReference type="InterPro" id="IPR004839">
    <property type="entry name" value="Aminotransferase_I/II_large"/>
</dbReference>
<dbReference type="InterPro" id="IPR005861">
    <property type="entry name" value="HisP_aminotrans"/>
</dbReference>
<dbReference type="InterPro" id="IPR015424">
    <property type="entry name" value="PyrdxlP-dep_Trfase"/>
</dbReference>
<dbReference type="InterPro" id="IPR015421">
    <property type="entry name" value="PyrdxlP-dep_Trfase_major"/>
</dbReference>
<dbReference type="InterPro" id="IPR015422">
    <property type="entry name" value="PyrdxlP-dep_Trfase_small"/>
</dbReference>
<dbReference type="NCBIfam" id="TIGR01141">
    <property type="entry name" value="hisC"/>
    <property type="match status" value="1"/>
</dbReference>
<dbReference type="PANTHER" id="PTHR42885:SF2">
    <property type="entry name" value="HISTIDINOL-PHOSPHATE AMINOTRANSFERASE"/>
    <property type="match status" value="1"/>
</dbReference>
<dbReference type="PANTHER" id="PTHR42885">
    <property type="entry name" value="HISTIDINOL-PHOSPHATE AMINOTRANSFERASE-RELATED"/>
    <property type="match status" value="1"/>
</dbReference>
<dbReference type="Pfam" id="PF00155">
    <property type="entry name" value="Aminotran_1_2"/>
    <property type="match status" value="1"/>
</dbReference>
<dbReference type="SUPFAM" id="SSF53383">
    <property type="entry name" value="PLP-dependent transferases"/>
    <property type="match status" value="1"/>
</dbReference>
<keyword id="KW-0028">Amino-acid biosynthesis</keyword>
<keyword id="KW-0032">Aminotransferase</keyword>
<keyword id="KW-0368">Histidine biosynthesis</keyword>
<keyword id="KW-0663">Pyridoxal phosphate</keyword>
<keyword id="KW-1185">Reference proteome</keyword>
<keyword id="KW-0808">Transferase</keyword>
<sequence length="356" mass="41156">MIQELFRKDIKDFRPYDAKGEKYKIKLDANESFIGLSKEIKNKIIRSLIELEFNNYPDPDATKLKKAYGDYIGIDEKNIMVGNGSDELIQILTNAFLDKNEKIVTLNPDFSMYEVYTKVRGGKVSVFDLDEDFKLNVNKIIEYINEEKPKMFIFSNPNNPTGGVIPKYDIIKIIENVNCIVVVDEAYMEFYGDSILDYIKKYDNLIVLRTASKAIGSAALRLGFLITNDTLLREIKKVKPPFNVNSVSQVIGEIILKDKDFIRESIDKVLYERNYLLKELKKIDGLKVYETKSNFVLIYNENANEINESLIKIGIKVRSFTDENLKNFIRITVGSREQNIEVINCIKGDNYDYKEM</sequence>
<evidence type="ECO:0000255" key="1">
    <source>
        <dbReference type="HAMAP-Rule" id="MF_01023"/>
    </source>
</evidence>
<name>HIS8_CLONN</name>
<accession>A0PXP5</accession>
<reference key="1">
    <citation type="journal article" date="2006" name="Nat. Biotechnol.">
        <title>The genome and transcriptomes of the anti-tumor agent Clostridium novyi-NT.</title>
        <authorList>
            <person name="Bettegowda C."/>
            <person name="Huang X."/>
            <person name="Lin J."/>
            <person name="Cheong I."/>
            <person name="Kohli M."/>
            <person name="Szabo S.A."/>
            <person name="Zhang X."/>
            <person name="Diaz L.A. Jr."/>
            <person name="Velculescu V.E."/>
            <person name="Parmigiani G."/>
            <person name="Kinzler K.W."/>
            <person name="Vogelstein B."/>
            <person name="Zhou S."/>
        </authorList>
    </citation>
    <scope>NUCLEOTIDE SEQUENCE [LARGE SCALE GENOMIC DNA]</scope>
    <source>
        <strain>NT</strain>
    </source>
</reference>
<proteinExistence type="inferred from homology"/>